<feature type="chain" id="PRO_0000318897" description="AP-2 complex subunit mu">
    <location>
        <begin position="1"/>
        <end position="435"/>
    </location>
</feature>
<feature type="domain" description="MHD" evidence="3">
    <location>
        <begin position="170"/>
        <end position="434"/>
    </location>
</feature>
<feature type="binding site" evidence="1">
    <location>
        <position position="341"/>
    </location>
    <ligand>
        <name>a 1,2-diacyl-sn-glycero-3-phospho-(1D-myo-inositol-3,4,5-trisphosphate)</name>
        <dbReference type="ChEBI" id="CHEBI:57836"/>
    </ligand>
</feature>
<feature type="binding site" evidence="1">
    <location>
        <position position="345"/>
    </location>
    <ligand>
        <name>a 1,2-diacyl-sn-glycero-3-phospho-(1D-myo-inositol-3,4,5-trisphosphate)</name>
        <dbReference type="ChEBI" id="CHEBI:57836"/>
    </ligand>
</feature>
<feature type="binding site" evidence="1">
    <location>
        <position position="354"/>
    </location>
    <ligand>
        <name>a 1,2-diacyl-sn-glycero-3-phospho-(1D-myo-inositol-3,4,5-trisphosphate)</name>
        <dbReference type="ChEBI" id="CHEBI:57836"/>
    </ligand>
</feature>
<organism>
    <name type="scientific">Xenopus tropicalis</name>
    <name type="common">Western clawed frog</name>
    <name type="synonym">Silurana tropicalis</name>
    <dbReference type="NCBI Taxonomy" id="8364"/>
    <lineage>
        <taxon>Eukaryota</taxon>
        <taxon>Metazoa</taxon>
        <taxon>Chordata</taxon>
        <taxon>Craniata</taxon>
        <taxon>Vertebrata</taxon>
        <taxon>Euteleostomi</taxon>
        <taxon>Amphibia</taxon>
        <taxon>Batrachia</taxon>
        <taxon>Anura</taxon>
        <taxon>Pipoidea</taxon>
        <taxon>Pipidae</taxon>
        <taxon>Xenopodinae</taxon>
        <taxon>Xenopus</taxon>
        <taxon>Silurana</taxon>
    </lineage>
</organism>
<gene>
    <name type="primary">ap2m1</name>
</gene>
<keyword id="KW-1003">Cell membrane</keyword>
<keyword id="KW-0168">Coated pit</keyword>
<keyword id="KW-0254">Endocytosis</keyword>
<keyword id="KW-0446">Lipid-binding</keyword>
<keyword id="KW-0472">Membrane</keyword>
<keyword id="KW-0653">Protein transport</keyword>
<keyword id="KW-1185">Reference proteome</keyword>
<keyword id="KW-0813">Transport</keyword>
<reference key="1">
    <citation type="submission" date="2003-11" db="EMBL/GenBank/DDBJ databases">
        <authorList>
            <consortium name="NIH - Xenopus Gene Collection (XGC) project"/>
        </authorList>
    </citation>
    <scope>NUCLEOTIDE SEQUENCE [LARGE SCALE MRNA]</scope>
    <source>
        <tissue>Embryo</tissue>
    </source>
</reference>
<evidence type="ECO:0000250" key="1">
    <source>
        <dbReference type="UniProtKB" id="P84092"/>
    </source>
</evidence>
<evidence type="ECO:0000250" key="2">
    <source>
        <dbReference type="UniProtKB" id="Q96CW1"/>
    </source>
</evidence>
<evidence type="ECO:0000255" key="3">
    <source>
        <dbReference type="PROSITE-ProRule" id="PRU00404"/>
    </source>
</evidence>
<evidence type="ECO:0000305" key="4"/>
<dbReference type="EMBL" id="BC061374">
    <property type="protein sequence ID" value="AAH61374.1"/>
    <property type="molecule type" value="mRNA"/>
</dbReference>
<dbReference type="RefSeq" id="NP_988975.1">
    <property type="nucleotide sequence ID" value="NM_203644.1"/>
</dbReference>
<dbReference type="RefSeq" id="XP_031757458.1">
    <property type="nucleotide sequence ID" value="XM_031901598.1"/>
</dbReference>
<dbReference type="SMR" id="Q6P856"/>
<dbReference type="FunCoup" id="Q6P856">
    <property type="interactions" value="2461"/>
</dbReference>
<dbReference type="STRING" id="8364.ENSXETP00000022361"/>
<dbReference type="PaxDb" id="8364-ENSXETP00000037610"/>
<dbReference type="DNASU" id="394572"/>
<dbReference type="GeneID" id="394572"/>
<dbReference type="KEGG" id="xtr:394572"/>
<dbReference type="AGR" id="Xenbase:XB-GENE-6258427"/>
<dbReference type="CTD" id="1173"/>
<dbReference type="Xenbase" id="XB-GENE-6258427">
    <property type="gene designation" value="ap2m1"/>
</dbReference>
<dbReference type="eggNOG" id="KOG0938">
    <property type="taxonomic scope" value="Eukaryota"/>
</dbReference>
<dbReference type="InParanoid" id="Q6P856"/>
<dbReference type="OMA" id="VWKIPRI"/>
<dbReference type="OrthoDB" id="10259133at2759"/>
<dbReference type="Reactome" id="R-XTR-196025">
    <property type="pathway name" value="Formation of annular gap junctions"/>
</dbReference>
<dbReference type="Reactome" id="R-XTR-437239">
    <property type="pathway name" value="Recycling pathway of L1"/>
</dbReference>
<dbReference type="Reactome" id="R-XTR-5099900">
    <property type="pathway name" value="WNT5A-dependent internalization of FZD4"/>
</dbReference>
<dbReference type="Reactome" id="R-XTR-5140745">
    <property type="pathway name" value="WNT5A-dependent internalization of FZD2, FZD5 and ROR2"/>
</dbReference>
<dbReference type="Reactome" id="R-XTR-8856825">
    <property type="pathway name" value="Cargo recognition for clathrin-mediated endocytosis"/>
</dbReference>
<dbReference type="Reactome" id="R-XTR-8866427">
    <property type="pathway name" value="VLDLR internalisation and degradation"/>
</dbReference>
<dbReference type="Reactome" id="R-XTR-8964038">
    <property type="pathway name" value="LDL clearance"/>
</dbReference>
<dbReference type="Proteomes" id="UP000008143">
    <property type="component" value="Chromosome 5"/>
</dbReference>
<dbReference type="Bgee" id="ENSXETG00000017276">
    <property type="expression patterns" value="Expressed in brain and 24 other cell types or tissues"/>
</dbReference>
<dbReference type="GO" id="GO:0030131">
    <property type="term" value="C:clathrin adaptor complex"/>
    <property type="evidence" value="ECO:0007669"/>
    <property type="project" value="InterPro"/>
</dbReference>
<dbReference type="GO" id="GO:0005905">
    <property type="term" value="C:clathrin-coated pit"/>
    <property type="evidence" value="ECO:0007669"/>
    <property type="project" value="UniProtKB-KW"/>
</dbReference>
<dbReference type="GO" id="GO:0005886">
    <property type="term" value="C:plasma membrane"/>
    <property type="evidence" value="ECO:0007669"/>
    <property type="project" value="UniProtKB-SubCell"/>
</dbReference>
<dbReference type="GO" id="GO:0008289">
    <property type="term" value="F:lipid binding"/>
    <property type="evidence" value="ECO:0007669"/>
    <property type="project" value="UniProtKB-KW"/>
</dbReference>
<dbReference type="GO" id="GO:0006897">
    <property type="term" value="P:endocytosis"/>
    <property type="evidence" value="ECO:0007669"/>
    <property type="project" value="UniProtKB-KW"/>
</dbReference>
<dbReference type="GO" id="GO:0006886">
    <property type="term" value="P:intracellular protein transport"/>
    <property type="evidence" value="ECO:0007669"/>
    <property type="project" value="InterPro"/>
</dbReference>
<dbReference type="CDD" id="cd09251">
    <property type="entry name" value="AP-2_Mu2_Cterm"/>
    <property type="match status" value="1"/>
</dbReference>
<dbReference type="CDD" id="cd14836">
    <property type="entry name" value="AP2_Mu_N"/>
    <property type="match status" value="1"/>
</dbReference>
<dbReference type="FunFam" id="2.60.40.1170:FF:000008">
    <property type="entry name" value="AP-2 complex subunit mu isoform 2"/>
    <property type="match status" value="1"/>
</dbReference>
<dbReference type="FunFam" id="3.30.450.60:FF:000002">
    <property type="entry name" value="AP-2 complex subunit mu, putative"/>
    <property type="match status" value="1"/>
</dbReference>
<dbReference type="Gene3D" id="3.30.450.60">
    <property type="match status" value="1"/>
</dbReference>
<dbReference type="Gene3D" id="2.60.40.1170">
    <property type="entry name" value="Mu homology domain, subdomain B"/>
    <property type="match status" value="2"/>
</dbReference>
<dbReference type="InterPro" id="IPR050431">
    <property type="entry name" value="Adaptor_comp_med_subunit"/>
</dbReference>
<dbReference type="InterPro" id="IPR036168">
    <property type="entry name" value="AP2_Mu_C_sf"/>
</dbReference>
<dbReference type="InterPro" id="IPR043532">
    <property type="entry name" value="AP2_Mu_N"/>
</dbReference>
<dbReference type="InterPro" id="IPR022775">
    <property type="entry name" value="AP_mu_sigma_su"/>
</dbReference>
<dbReference type="InterPro" id="IPR001392">
    <property type="entry name" value="Clathrin_mu"/>
</dbReference>
<dbReference type="InterPro" id="IPR018240">
    <property type="entry name" value="Clathrin_mu_CS"/>
</dbReference>
<dbReference type="InterPro" id="IPR011012">
    <property type="entry name" value="Longin-like_dom_sf"/>
</dbReference>
<dbReference type="InterPro" id="IPR028565">
    <property type="entry name" value="MHD"/>
</dbReference>
<dbReference type="InterPro" id="IPR043512">
    <property type="entry name" value="Mu2_C"/>
</dbReference>
<dbReference type="PANTHER" id="PTHR10529">
    <property type="entry name" value="AP COMPLEX SUBUNIT MU"/>
    <property type="match status" value="1"/>
</dbReference>
<dbReference type="Pfam" id="PF00928">
    <property type="entry name" value="Adap_comp_sub"/>
    <property type="match status" value="1"/>
</dbReference>
<dbReference type="Pfam" id="PF01217">
    <property type="entry name" value="Clat_adaptor_s"/>
    <property type="match status" value="1"/>
</dbReference>
<dbReference type="PIRSF" id="PIRSF005992">
    <property type="entry name" value="Clathrin_mu"/>
    <property type="match status" value="1"/>
</dbReference>
<dbReference type="PRINTS" id="PR00314">
    <property type="entry name" value="CLATHRINADPT"/>
</dbReference>
<dbReference type="SUPFAM" id="SSF49447">
    <property type="entry name" value="Second domain of Mu2 adaptin subunit (ap50) of ap2 adaptor"/>
    <property type="match status" value="1"/>
</dbReference>
<dbReference type="SUPFAM" id="SSF64356">
    <property type="entry name" value="SNARE-like"/>
    <property type="match status" value="1"/>
</dbReference>
<dbReference type="PROSITE" id="PS00990">
    <property type="entry name" value="CLAT_ADAPTOR_M_1"/>
    <property type="match status" value="1"/>
</dbReference>
<dbReference type="PROSITE" id="PS00991">
    <property type="entry name" value="CLAT_ADAPTOR_M_2"/>
    <property type="match status" value="1"/>
</dbReference>
<dbReference type="PROSITE" id="PS51072">
    <property type="entry name" value="MHD"/>
    <property type="match status" value="1"/>
</dbReference>
<proteinExistence type="evidence at transcript level"/>
<comment type="function">
    <text evidence="1 2">Component of the adaptor complexes which link clathrin to receptors in coated vesicles. Clathrin-associated protein complexes are believed to interact with the cytoplasmic tails of membrane proteins, leading to their selection and concentration. AP50 is a subunit of the plasma membrane adaptor. The complex binds polyphosphoinositide-containing lipids.</text>
</comment>
<comment type="subunit">
    <text evidence="2">Adaptor protein complex 2 (AP-2) is a heterotetramer composed of two large adaptins (alpha-type subunit and beta-type subunit), a medium adaptin (mu-type subunit) and a small adaptin (sigma-type subunit).</text>
</comment>
<comment type="subcellular location">
    <subcellularLocation>
        <location evidence="2">Cell membrane</location>
    </subcellularLocation>
    <subcellularLocation>
        <location evidence="2">Membrane</location>
        <location evidence="2">Coated pit</location>
        <topology evidence="2">Peripheral membrane protein</topology>
        <orientation evidence="2">Cytoplasmic side</orientation>
    </subcellularLocation>
</comment>
<comment type="similarity">
    <text evidence="4">Belongs to the adaptor complexes medium subunit family.</text>
</comment>
<protein>
    <recommendedName>
        <fullName>AP-2 complex subunit mu</fullName>
    </recommendedName>
    <alternativeName>
        <fullName>AP-2 mu chain</fullName>
    </alternativeName>
    <alternativeName>
        <fullName>Clathrin assembly protein complex 2 mu medium chain</fullName>
    </alternativeName>
    <alternativeName>
        <fullName>Clathrin coat assembly protein AP50</fullName>
    </alternativeName>
    <alternativeName>
        <fullName>Clathrin coat-associated protein AP50</fullName>
    </alternativeName>
    <alternativeName>
        <fullName>Mu2-adaptin</fullName>
    </alternativeName>
    <alternativeName>
        <fullName>Plasma membrane adaptor AP-2 50 kDa protein</fullName>
    </alternativeName>
</protein>
<accession>Q6P856</accession>
<name>AP2M1_XENTR</name>
<sequence>MIGGLFIYNHKGEVLISRVYRDDIGRNAVDAFRVNVIHARQQVRSPVTNIARTSFFHVKRSNIWLAAVTKQNVNAAMVFEFLYKMCDVMTAYFGKISEENIKNNFVLIYELLDEILDFGYPQNSETGALKTFITQQGIKSQHQTKEEQSQITSQVTGQIGWRREGIKYRRNELFLDVLESVNLLMSPQGQVLSAHVSGRVVMKSYLSGMPECKFGMNDKIVIEKQGKGTADETGKTGKQSIAIDDCTFHQCVRLSKFDSERSISFIPPDGEFELMRYRTTKDIILPFRVIPLVREVGRTKLEVKVVIKSNFKPSLLAQKIEVRIPTPLNTSGVQVICMKGKAKYKASENAIVWKIKRMAGMKESQISAEIELLPTNDKKKWARPPISMNFEVPFAPSGLKVRYLKVFEPKLNYSDHDVIKWVRYIGRSGIYETRC</sequence>